<protein>
    <recommendedName>
        <fullName>Biotin carboxyl carrier protein of acetyl-CoA carboxylase</fullName>
        <shortName>BCCP</shortName>
    </recommendedName>
</protein>
<comment type="function">
    <text evidence="1">This protein is a component of the acetyl coenzyme A carboxylase complex; first, biotin carboxylase catalyzes the carboxylation of the carrier protein and then the transcarboxylase transfers the carboxyl group to form malonyl-CoA.</text>
</comment>
<comment type="pathway">
    <text>Lipid metabolism; fatty acid biosynthesis.</text>
</comment>
<comment type="subunit">
    <text evidence="1">Homodimer.</text>
</comment>
<evidence type="ECO:0000250" key="1"/>
<evidence type="ECO:0000255" key="2">
    <source>
        <dbReference type="PROSITE-ProRule" id="PRU01066"/>
    </source>
</evidence>
<sequence>MDIRKIKKLIELVEESGISELEISEGEESVRISRAAPAASFPVMQQAYAAPMMQQPAQSNAAAPATVPSMEAPAAAEISGHIVRSPMVGTFYRTPSPDAKAFIEVGQKVNVGDTLCIVEAMKMMNQIEADKSGTVKAILVESGQPVEFDEPLVVIE</sequence>
<reference key="1">
    <citation type="journal article" date="2002" name="Nucleic Acids Res.">
        <title>Genome sequence of Shigella flexneri 2a: insights into pathogenicity through comparison with genomes of Escherichia coli K12 and O157.</title>
        <authorList>
            <person name="Jin Q."/>
            <person name="Yuan Z."/>
            <person name="Xu J."/>
            <person name="Wang Y."/>
            <person name="Shen Y."/>
            <person name="Lu W."/>
            <person name="Wang J."/>
            <person name="Liu H."/>
            <person name="Yang J."/>
            <person name="Yang F."/>
            <person name="Zhang X."/>
            <person name="Zhang J."/>
            <person name="Yang G."/>
            <person name="Wu H."/>
            <person name="Qu D."/>
            <person name="Dong J."/>
            <person name="Sun L."/>
            <person name="Xue Y."/>
            <person name="Zhao A."/>
            <person name="Gao Y."/>
            <person name="Zhu J."/>
            <person name="Kan B."/>
            <person name="Ding K."/>
            <person name="Chen S."/>
            <person name="Cheng H."/>
            <person name="Yao Z."/>
            <person name="He B."/>
            <person name="Chen R."/>
            <person name="Ma D."/>
            <person name="Qiang B."/>
            <person name="Wen Y."/>
            <person name="Hou Y."/>
            <person name="Yu J."/>
        </authorList>
    </citation>
    <scope>NUCLEOTIDE SEQUENCE [LARGE SCALE GENOMIC DNA]</scope>
    <source>
        <strain>301 / Serotype 2a</strain>
    </source>
</reference>
<reference key="2">
    <citation type="journal article" date="2003" name="Infect. Immun.">
        <title>Complete genome sequence and comparative genomics of Shigella flexneri serotype 2a strain 2457T.</title>
        <authorList>
            <person name="Wei J."/>
            <person name="Goldberg M.B."/>
            <person name="Burland V."/>
            <person name="Venkatesan M.M."/>
            <person name="Deng W."/>
            <person name="Fournier G."/>
            <person name="Mayhew G.F."/>
            <person name="Plunkett G. III"/>
            <person name="Rose D.J."/>
            <person name="Darling A."/>
            <person name="Mau B."/>
            <person name="Perna N.T."/>
            <person name="Payne S.M."/>
            <person name="Runyen-Janecky L.J."/>
            <person name="Zhou S."/>
            <person name="Schwartz D.C."/>
            <person name="Blattner F.R."/>
        </authorList>
    </citation>
    <scope>NUCLEOTIDE SEQUENCE [LARGE SCALE GENOMIC DNA]</scope>
    <source>
        <strain>ATCC 700930 / 2457T / Serotype 2a</strain>
    </source>
</reference>
<feature type="chain" id="PRO_0000146811" description="Biotin carboxyl carrier protein of acetyl-CoA carboxylase">
    <location>
        <begin position="1"/>
        <end position="156"/>
    </location>
</feature>
<feature type="domain" description="Biotinyl-binding" evidence="2">
    <location>
        <begin position="73"/>
        <end position="156"/>
    </location>
</feature>
<feature type="modified residue" description="N6-biotinyllysine" evidence="1 2">
    <location>
        <position position="122"/>
    </location>
</feature>
<gene>
    <name type="primary">accB</name>
    <name type="ordered locus">SF3293</name>
    <name type="ordered locus">S3510</name>
</gene>
<name>BCCP_SHIFL</name>
<organism>
    <name type="scientific">Shigella flexneri</name>
    <dbReference type="NCBI Taxonomy" id="623"/>
    <lineage>
        <taxon>Bacteria</taxon>
        <taxon>Pseudomonadati</taxon>
        <taxon>Pseudomonadota</taxon>
        <taxon>Gammaproteobacteria</taxon>
        <taxon>Enterobacterales</taxon>
        <taxon>Enterobacteriaceae</taxon>
        <taxon>Shigella</taxon>
    </lineage>
</organism>
<dbReference type="EMBL" id="AE005674">
    <property type="protein sequence ID" value="AAN44757.1"/>
    <property type="molecule type" value="Genomic_DNA"/>
</dbReference>
<dbReference type="EMBL" id="AE014073">
    <property type="protein sequence ID" value="AAP18568.1"/>
    <property type="molecule type" value="Genomic_DNA"/>
</dbReference>
<dbReference type="RefSeq" id="NP_709050.1">
    <property type="nucleotide sequence ID" value="NC_004337.2"/>
</dbReference>
<dbReference type="RefSeq" id="WP_000354622.1">
    <property type="nucleotide sequence ID" value="NZ_WPGW01000026.1"/>
</dbReference>
<dbReference type="BMRB" id="P0ABE1"/>
<dbReference type="SMR" id="P0ABE1"/>
<dbReference type="STRING" id="198214.SF3293"/>
<dbReference type="PaxDb" id="198214-SF3293"/>
<dbReference type="GeneID" id="1027068"/>
<dbReference type="GeneID" id="93778732"/>
<dbReference type="KEGG" id="sfl:SF3293"/>
<dbReference type="KEGG" id="sfx:S3510"/>
<dbReference type="PATRIC" id="fig|198214.7.peg.3901"/>
<dbReference type="HOGENOM" id="CLU_016733_3_1_6"/>
<dbReference type="UniPathway" id="UPA00094"/>
<dbReference type="Proteomes" id="UP000001006">
    <property type="component" value="Chromosome"/>
</dbReference>
<dbReference type="Proteomes" id="UP000002673">
    <property type="component" value="Chromosome"/>
</dbReference>
<dbReference type="GO" id="GO:0009317">
    <property type="term" value="C:acetyl-CoA carboxylase complex"/>
    <property type="evidence" value="ECO:0007669"/>
    <property type="project" value="InterPro"/>
</dbReference>
<dbReference type="GO" id="GO:0003989">
    <property type="term" value="F:acetyl-CoA carboxylase activity"/>
    <property type="evidence" value="ECO:0007669"/>
    <property type="project" value="InterPro"/>
</dbReference>
<dbReference type="GO" id="GO:0006633">
    <property type="term" value="P:fatty acid biosynthetic process"/>
    <property type="evidence" value="ECO:0007669"/>
    <property type="project" value="UniProtKB-UniPathway"/>
</dbReference>
<dbReference type="CDD" id="cd06850">
    <property type="entry name" value="biotinyl_domain"/>
    <property type="match status" value="1"/>
</dbReference>
<dbReference type="FunFam" id="2.40.50.100:FF:000003">
    <property type="entry name" value="Acetyl-CoA carboxylase biotin carboxyl carrier protein"/>
    <property type="match status" value="1"/>
</dbReference>
<dbReference type="Gene3D" id="2.40.50.100">
    <property type="match status" value="1"/>
</dbReference>
<dbReference type="InterPro" id="IPR001249">
    <property type="entry name" value="AcCoA_biotinCC"/>
</dbReference>
<dbReference type="InterPro" id="IPR001882">
    <property type="entry name" value="Biotin_BS"/>
</dbReference>
<dbReference type="InterPro" id="IPR050709">
    <property type="entry name" value="Biotin_Carboxyl_Carrier/Decarb"/>
</dbReference>
<dbReference type="InterPro" id="IPR000089">
    <property type="entry name" value="Biotin_lipoyl"/>
</dbReference>
<dbReference type="InterPro" id="IPR011053">
    <property type="entry name" value="Single_hybrid_motif"/>
</dbReference>
<dbReference type="NCBIfam" id="TIGR00531">
    <property type="entry name" value="BCCP"/>
    <property type="match status" value="1"/>
</dbReference>
<dbReference type="PANTHER" id="PTHR45266">
    <property type="entry name" value="OXALOACETATE DECARBOXYLASE ALPHA CHAIN"/>
    <property type="match status" value="1"/>
</dbReference>
<dbReference type="PANTHER" id="PTHR45266:SF3">
    <property type="entry name" value="OXALOACETATE DECARBOXYLASE ALPHA CHAIN"/>
    <property type="match status" value="1"/>
</dbReference>
<dbReference type="Pfam" id="PF00364">
    <property type="entry name" value="Biotin_lipoyl"/>
    <property type="match status" value="1"/>
</dbReference>
<dbReference type="PRINTS" id="PR01071">
    <property type="entry name" value="ACOABIOTINCC"/>
</dbReference>
<dbReference type="SUPFAM" id="SSF51230">
    <property type="entry name" value="Single hybrid motif"/>
    <property type="match status" value="1"/>
</dbReference>
<dbReference type="PROSITE" id="PS00188">
    <property type="entry name" value="BIOTIN"/>
    <property type="match status" value="1"/>
</dbReference>
<dbReference type="PROSITE" id="PS50968">
    <property type="entry name" value="BIOTINYL_LIPOYL"/>
    <property type="match status" value="1"/>
</dbReference>
<keyword id="KW-0092">Biotin</keyword>
<keyword id="KW-0275">Fatty acid biosynthesis</keyword>
<keyword id="KW-0276">Fatty acid metabolism</keyword>
<keyword id="KW-0444">Lipid biosynthesis</keyword>
<keyword id="KW-0443">Lipid metabolism</keyword>
<keyword id="KW-1185">Reference proteome</keyword>
<accession>P0ABE1</accession>
<accession>P02905</accession>
<proteinExistence type="inferred from homology"/>